<evidence type="ECO:0000255" key="1">
    <source>
        <dbReference type="HAMAP-Rule" id="MF_00011"/>
    </source>
</evidence>
<organism>
    <name type="scientific">Chlorobium luteolum (strain DSM 273 / BCRC 81028 / 2530)</name>
    <name type="common">Pelodictyon luteolum</name>
    <dbReference type="NCBI Taxonomy" id="319225"/>
    <lineage>
        <taxon>Bacteria</taxon>
        <taxon>Pseudomonadati</taxon>
        <taxon>Chlorobiota</taxon>
        <taxon>Chlorobiia</taxon>
        <taxon>Chlorobiales</taxon>
        <taxon>Chlorobiaceae</taxon>
        <taxon>Chlorobium/Pelodictyon group</taxon>
        <taxon>Pelodictyon</taxon>
    </lineage>
</organism>
<gene>
    <name evidence="1" type="primary">purA</name>
    <name type="ordered locus">Plut_0213</name>
</gene>
<dbReference type="EC" id="6.3.4.4" evidence="1"/>
<dbReference type="EMBL" id="CP000096">
    <property type="protein sequence ID" value="ABB23101.1"/>
    <property type="molecule type" value="Genomic_DNA"/>
</dbReference>
<dbReference type="RefSeq" id="WP_011356976.1">
    <property type="nucleotide sequence ID" value="NC_007512.1"/>
</dbReference>
<dbReference type="SMR" id="Q3B6D0"/>
<dbReference type="STRING" id="319225.Plut_0213"/>
<dbReference type="KEGG" id="plt:Plut_0213"/>
<dbReference type="eggNOG" id="COG0104">
    <property type="taxonomic scope" value="Bacteria"/>
</dbReference>
<dbReference type="HOGENOM" id="CLU_029848_0_0_10"/>
<dbReference type="OrthoDB" id="9807553at2"/>
<dbReference type="UniPathway" id="UPA00075">
    <property type="reaction ID" value="UER00335"/>
</dbReference>
<dbReference type="Proteomes" id="UP000002709">
    <property type="component" value="Chromosome"/>
</dbReference>
<dbReference type="GO" id="GO:0005737">
    <property type="term" value="C:cytoplasm"/>
    <property type="evidence" value="ECO:0007669"/>
    <property type="project" value="UniProtKB-SubCell"/>
</dbReference>
<dbReference type="GO" id="GO:0004019">
    <property type="term" value="F:adenylosuccinate synthase activity"/>
    <property type="evidence" value="ECO:0007669"/>
    <property type="project" value="UniProtKB-UniRule"/>
</dbReference>
<dbReference type="GO" id="GO:0005525">
    <property type="term" value="F:GTP binding"/>
    <property type="evidence" value="ECO:0007669"/>
    <property type="project" value="UniProtKB-UniRule"/>
</dbReference>
<dbReference type="GO" id="GO:0000287">
    <property type="term" value="F:magnesium ion binding"/>
    <property type="evidence" value="ECO:0007669"/>
    <property type="project" value="UniProtKB-UniRule"/>
</dbReference>
<dbReference type="GO" id="GO:0044208">
    <property type="term" value="P:'de novo' AMP biosynthetic process"/>
    <property type="evidence" value="ECO:0007669"/>
    <property type="project" value="UniProtKB-UniRule"/>
</dbReference>
<dbReference type="GO" id="GO:0046040">
    <property type="term" value="P:IMP metabolic process"/>
    <property type="evidence" value="ECO:0007669"/>
    <property type="project" value="TreeGrafter"/>
</dbReference>
<dbReference type="CDD" id="cd03108">
    <property type="entry name" value="AdSS"/>
    <property type="match status" value="1"/>
</dbReference>
<dbReference type="FunFam" id="1.10.300.10:FF:000001">
    <property type="entry name" value="Adenylosuccinate synthetase"/>
    <property type="match status" value="1"/>
</dbReference>
<dbReference type="FunFam" id="3.90.170.10:FF:000001">
    <property type="entry name" value="Adenylosuccinate synthetase"/>
    <property type="match status" value="1"/>
</dbReference>
<dbReference type="Gene3D" id="3.40.440.10">
    <property type="entry name" value="Adenylosuccinate Synthetase, subunit A, domain 1"/>
    <property type="match status" value="1"/>
</dbReference>
<dbReference type="Gene3D" id="1.10.300.10">
    <property type="entry name" value="Adenylosuccinate Synthetase, subunit A, domain 2"/>
    <property type="match status" value="1"/>
</dbReference>
<dbReference type="Gene3D" id="3.90.170.10">
    <property type="entry name" value="Adenylosuccinate Synthetase, subunit A, domain 3"/>
    <property type="match status" value="1"/>
</dbReference>
<dbReference type="HAMAP" id="MF_00011">
    <property type="entry name" value="Adenylosucc_synth"/>
    <property type="match status" value="1"/>
</dbReference>
<dbReference type="InterPro" id="IPR018220">
    <property type="entry name" value="Adenylosuccin_syn_GTP-bd"/>
</dbReference>
<dbReference type="InterPro" id="IPR033128">
    <property type="entry name" value="Adenylosuccin_syn_Lys_AS"/>
</dbReference>
<dbReference type="InterPro" id="IPR042109">
    <property type="entry name" value="Adenylosuccinate_synth_dom1"/>
</dbReference>
<dbReference type="InterPro" id="IPR042110">
    <property type="entry name" value="Adenylosuccinate_synth_dom2"/>
</dbReference>
<dbReference type="InterPro" id="IPR042111">
    <property type="entry name" value="Adenylosuccinate_synth_dom3"/>
</dbReference>
<dbReference type="InterPro" id="IPR001114">
    <property type="entry name" value="Adenylosuccinate_synthetase"/>
</dbReference>
<dbReference type="InterPro" id="IPR027417">
    <property type="entry name" value="P-loop_NTPase"/>
</dbReference>
<dbReference type="NCBIfam" id="NF002223">
    <property type="entry name" value="PRK01117.1"/>
    <property type="match status" value="1"/>
</dbReference>
<dbReference type="NCBIfam" id="TIGR00184">
    <property type="entry name" value="purA"/>
    <property type="match status" value="1"/>
</dbReference>
<dbReference type="PANTHER" id="PTHR11846">
    <property type="entry name" value="ADENYLOSUCCINATE SYNTHETASE"/>
    <property type="match status" value="1"/>
</dbReference>
<dbReference type="PANTHER" id="PTHR11846:SF0">
    <property type="entry name" value="ADENYLOSUCCINATE SYNTHETASE"/>
    <property type="match status" value="1"/>
</dbReference>
<dbReference type="Pfam" id="PF00709">
    <property type="entry name" value="Adenylsucc_synt"/>
    <property type="match status" value="1"/>
</dbReference>
<dbReference type="SMART" id="SM00788">
    <property type="entry name" value="Adenylsucc_synt"/>
    <property type="match status" value="1"/>
</dbReference>
<dbReference type="SUPFAM" id="SSF52540">
    <property type="entry name" value="P-loop containing nucleoside triphosphate hydrolases"/>
    <property type="match status" value="1"/>
</dbReference>
<dbReference type="PROSITE" id="PS01266">
    <property type="entry name" value="ADENYLOSUCCIN_SYN_1"/>
    <property type="match status" value="1"/>
</dbReference>
<dbReference type="PROSITE" id="PS00513">
    <property type="entry name" value="ADENYLOSUCCIN_SYN_2"/>
    <property type="match status" value="1"/>
</dbReference>
<feature type="chain" id="PRO_1000000886" description="Adenylosuccinate synthetase">
    <location>
        <begin position="1"/>
        <end position="434"/>
    </location>
</feature>
<feature type="active site" description="Proton acceptor" evidence="1">
    <location>
        <position position="23"/>
    </location>
</feature>
<feature type="active site" description="Proton donor" evidence="1">
    <location>
        <position position="51"/>
    </location>
</feature>
<feature type="binding site" evidence="1">
    <location>
        <begin position="22"/>
        <end position="28"/>
    </location>
    <ligand>
        <name>GTP</name>
        <dbReference type="ChEBI" id="CHEBI:37565"/>
    </ligand>
</feature>
<feature type="binding site" description="in other chain" evidence="1">
    <location>
        <begin position="23"/>
        <end position="26"/>
    </location>
    <ligand>
        <name>IMP</name>
        <dbReference type="ChEBI" id="CHEBI:58053"/>
        <note>ligand shared between dimeric partners</note>
    </ligand>
</feature>
<feature type="binding site" evidence="1">
    <location>
        <position position="23"/>
    </location>
    <ligand>
        <name>Mg(2+)</name>
        <dbReference type="ChEBI" id="CHEBI:18420"/>
    </ligand>
</feature>
<feature type="binding site" description="in other chain" evidence="1">
    <location>
        <begin position="48"/>
        <end position="51"/>
    </location>
    <ligand>
        <name>IMP</name>
        <dbReference type="ChEBI" id="CHEBI:58053"/>
        <note>ligand shared between dimeric partners</note>
    </ligand>
</feature>
<feature type="binding site" evidence="1">
    <location>
        <begin position="50"/>
        <end position="52"/>
    </location>
    <ligand>
        <name>GTP</name>
        <dbReference type="ChEBI" id="CHEBI:37565"/>
    </ligand>
</feature>
<feature type="binding site" evidence="1">
    <location>
        <position position="50"/>
    </location>
    <ligand>
        <name>Mg(2+)</name>
        <dbReference type="ChEBI" id="CHEBI:18420"/>
    </ligand>
</feature>
<feature type="binding site" description="in other chain" evidence="1">
    <location>
        <position position="139"/>
    </location>
    <ligand>
        <name>IMP</name>
        <dbReference type="ChEBI" id="CHEBI:58053"/>
        <note>ligand shared between dimeric partners</note>
    </ligand>
</feature>
<feature type="binding site" evidence="1">
    <location>
        <position position="153"/>
    </location>
    <ligand>
        <name>IMP</name>
        <dbReference type="ChEBI" id="CHEBI:58053"/>
        <note>ligand shared between dimeric partners</note>
    </ligand>
</feature>
<feature type="binding site" description="in other chain" evidence="1">
    <location>
        <position position="234"/>
    </location>
    <ligand>
        <name>IMP</name>
        <dbReference type="ChEBI" id="CHEBI:58053"/>
        <note>ligand shared between dimeric partners</note>
    </ligand>
</feature>
<feature type="binding site" description="in other chain" evidence="1">
    <location>
        <position position="249"/>
    </location>
    <ligand>
        <name>IMP</name>
        <dbReference type="ChEBI" id="CHEBI:58053"/>
        <note>ligand shared between dimeric partners</note>
    </ligand>
</feature>
<feature type="binding site" evidence="1">
    <location>
        <begin position="309"/>
        <end position="315"/>
    </location>
    <ligand>
        <name>substrate</name>
    </ligand>
</feature>
<feature type="binding site" description="in other chain" evidence="1">
    <location>
        <position position="313"/>
    </location>
    <ligand>
        <name>IMP</name>
        <dbReference type="ChEBI" id="CHEBI:58053"/>
        <note>ligand shared between dimeric partners</note>
    </ligand>
</feature>
<feature type="binding site" evidence="1">
    <location>
        <position position="315"/>
    </location>
    <ligand>
        <name>GTP</name>
        <dbReference type="ChEBI" id="CHEBI:37565"/>
    </ligand>
</feature>
<feature type="binding site" evidence="1">
    <location>
        <begin position="341"/>
        <end position="343"/>
    </location>
    <ligand>
        <name>GTP</name>
        <dbReference type="ChEBI" id="CHEBI:37565"/>
    </ligand>
</feature>
<feature type="binding site" evidence="1">
    <location>
        <begin position="423"/>
        <end position="425"/>
    </location>
    <ligand>
        <name>GTP</name>
        <dbReference type="ChEBI" id="CHEBI:37565"/>
    </ligand>
</feature>
<reference key="1">
    <citation type="submission" date="2005-08" db="EMBL/GenBank/DDBJ databases">
        <title>Complete sequence of Pelodictyon luteolum DSM 273.</title>
        <authorList>
            <consortium name="US DOE Joint Genome Institute"/>
            <person name="Copeland A."/>
            <person name="Lucas S."/>
            <person name="Lapidus A."/>
            <person name="Barry K."/>
            <person name="Detter J.C."/>
            <person name="Glavina T."/>
            <person name="Hammon N."/>
            <person name="Israni S."/>
            <person name="Pitluck S."/>
            <person name="Bryant D."/>
            <person name="Schmutz J."/>
            <person name="Larimer F."/>
            <person name="Land M."/>
            <person name="Kyrpides N."/>
            <person name="Ivanova N."/>
            <person name="Richardson P."/>
        </authorList>
    </citation>
    <scope>NUCLEOTIDE SEQUENCE [LARGE SCALE GENOMIC DNA]</scope>
    <source>
        <strain>DSM 273 / BCRC 81028 / 2530</strain>
    </source>
</reference>
<keyword id="KW-0963">Cytoplasm</keyword>
<keyword id="KW-0342">GTP-binding</keyword>
<keyword id="KW-0436">Ligase</keyword>
<keyword id="KW-0460">Magnesium</keyword>
<keyword id="KW-0479">Metal-binding</keyword>
<keyword id="KW-0547">Nucleotide-binding</keyword>
<keyword id="KW-0658">Purine biosynthesis</keyword>
<keyword id="KW-1185">Reference proteome</keyword>
<sequence length="434" mass="47691">MESKPFTLPSQSATVLIGTQFGDEGKGKLVDYLSDQYDIVVRYQGGANAGHTICFDGKSVVLHLIPSGIFNEKCVCVIGNGVVIDPVALLEEIAKVEELGYTVKGRLFISHNAHLIMPYHKRLDALHESAQGGQKIGTTGRGIGPSYEDKFARKGIRVVDLLSPGLLQEKLRENLAEKNKLFRNIYEGDEIDVESMVREYEEFDKLMDPYITNTQLYLNRQLRQGKTVLLEGAQGCLLDVDHGTYPYVTSSSPTSGGACTGSGIAPNHIGKVIGVCKAYMTRVGNGAFPTELNDATGEMLGRVGHEFGATTGRKRRCGWIDLVAMRYSVAVNGITELALTKLDVLDGFEEIKVCNSYMLNGKEIRDFPTDHQTLSAVQPVYTTLKGWMASNAAARTFEGMCPEAREYVAFLERELEVPVTFISVGPGREETVFR</sequence>
<proteinExistence type="inferred from homology"/>
<name>PURA_CHLL3</name>
<protein>
    <recommendedName>
        <fullName evidence="1">Adenylosuccinate synthetase</fullName>
        <shortName evidence="1">AMPSase</shortName>
        <shortName evidence="1">AdSS</shortName>
        <ecNumber evidence="1">6.3.4.4</ecNumber>
    </recommendedName>
    <alternativeName>
        <fullName evidence="1">IMP--aspartate ligase</fullName>
    </alternativeName>
</protein>
<comment type="function">
    <text evidence="1">Plays an important role in the de novo pathway of purine nucleotide biosynthesis. Catalyzes the first committed step in the biosynthesis of AMP from IMP.</text>
</comment>
<comment type="catalytic activity">
    <reaction evidence="1">
        <text>IMP + L-aspartate + GTP = N(6)-(1,2-dicarboxyethyl)-AMP + GDP + phosphate + 2 H(+)</text>
        <dbReference type="Rhea" id="RHEA:15753"/>
        <dbReference type="ChEBI" id="CHEBI:15378"/>
        <dbReference type="ChEBI" id="CHEBI:29991"/>
        <dbReference type="ChEBI" id="CHEBI:37565"/>
        <dbReference type="ChEBI" id="CHEBI:43474"/>
        <dbReference type="ChEBI" id="CHEBI:57567"/>
        <dbReference type="ChEBI" id="CHEBI:58053"/>
        <dbReference type="ChEBI" id="CHEBI:58189"/>
        <dbReference type="EC" id="6.3.4.4"/>
    </reaction>
</comment>
<comment type="cofactor">
    <cofactor evidence="1">
        <name>Mg(2+)</name>
        <dbReference type="ChEBI" id="CHEBI:18420"/>
    </cofactor>
    <text evidence="1">Binds 1 Mg(2+) ion per subunit.</text>
</comment>
<comment type="pathway">
    <text evidence="1">Purine metabolism; AMP biosynthesis via de novo pathway; AMP from IMP: step 1/2.</text>
</comment>
<comment type="subunit">
    <text evidence="1">Homodimer.</text>
</comment>
<comment type="subcellular location">
    <subcellularLocation>
        <location evidence="1">Cytoplasm</location>
    </subcellularLocation>
</comment>
<comment type="similarity">
    <text evidence="1">Belongs to the adenylosuccinate synthetase family.</text>
</comment>
<accession>Q3B6D0</accession>